<dbReference type="EMBL" id="AY727371">
    <property type="protein sequence ID" value="AAW56504.1"/>
    <property type="molecule type" value="Genomic_DNA"/>
</dbReference>
<dbReference type="SMR" id="Q5IHD9"/>
<dbReference type="GO" id="GO:0009535">
    <property type="term" value="C:chloroplast thylakoid membrane"/>
    <property type="evidence" value="ECO:0007669"/>
    <property type="project" value="UniProtKB-SubCell"/>
</dbReference>
<dbReference type="GO" id="GO:0009539">
    <property type="term" value="C:photosystem II reaction center"/>
    <property type="evidence" value="ECO:0007669"/>
    <property type="project" value="InterPro"/>
</dbReference>
<dbReference type="GO" id="GO:0015979">
    <property type="term" value="P:photosynthesis"/>
    <property type="evidence" value="ECO:0007669"/>
    <property type="project" value="UniProtKB-UniRule"/>
</dbReference>
<dbReference type="HAMAP" id="MF_00808">
    <property type="entry name" value="PSII_PsbT"/>
    <property type="match status" value="1"/>
</dbReference>
<dbReference type="InterPro" id="IPR001743">
    <property type="entry name" value="PSII_PsbT"/>
</dbReference>
<dbReference type="InterPro" id="IPR037268">
    <property type="entry name" value="PSII_PsbT_sf"/>
</dbReference>
<dbReference type="PANTHER" id="PTHR36411">
    <property type="match status" value="1"/>
</dbReference>
<dbReference type="PANTHER" id="PTHR36411:SF2">
    <property type="entry name" value="PHOTOSYSTEM II REACTION CENTER PROTEIN T"/>
    <property type="match status" value="1"/>
</dbReference>
<dbReference type="Pfam" id="PF01405">
    <property type="entry name" value="PsbT"/>
    <property type="match status" value="1"/>
</dbReference>
<dbReference type="SUPFAM" id="SSF161029">
    <property type="entry name" value="Photosystem II reaction center protein T, PsbT"/>
    <property type="match status" value="1"/>
</dbReference>
<organism>
    <name type="scientific">Magnolia acuminata</name>
    <name type="common">Cucumber tree</name>
    <name type="synonym">Magnolia virginiana var. acuminata</name>
    <dbReference type="NCBI Taxonomy" id="3404"/>
    <lineage>
        <taxon>Eukaryota</taxon>
        <taxon>Viridiplantae</taxon>
        <taxon>Streptophyta</taxon>
        <taxon>Embryophyta</taxon>
        <taxon>Tracheophyta</taxon>
        <taxon>Spermatophyta</taxon>
        <taxon>Magnoliopsida</taxon>
        <taxon>Magnoliidae</taxon>
        <taxon>Magnoliales</taxon>
        <taxon>Magnoliaceae</taxon>
        <taxon>Magnolia</taxon>
    </lineage>
</organism>
<geneLocation type="chloroplast"/>
<reference key="1">
    <citation type="journal article" date="2005" name="Am. J. Bot.">
        <title>The tortoise and the hare II: relative utility of 21 noncoding chloroplast DNA sequences for phylogenetic analysis.</title>
        <authorList>
            <person name="Shaw J."/>
            <person name="Lickey E.B."/>
            <person name="Beck J.T."/>
            <person name="Farmer S.B."/>
            <person name="Liu W."/>
            <person name="Miller J."/>
            <person name="Siripun K.C."/>
            <person name="Winder C.T."/>
            <person name="Schilling E.E."/>
            <person name="Small R.L."/>
        </authorList>
        <dbReference type="AGRICOLA" id="IND43689705"/>
    </citation>
    <scope>NUCLEOTIDE SEQUENCE [GENOMIC DNA]</scope>
</reference>
<proteinExistence type="inferred from homology"/>
<comment type="function">
    <text evidence="1">Found at the monomer-monomer interface of the photosystem II (PS II) dimer, plays a role in assembly and dimerization of PSII. PSII is a light-driven water plastoquinone oxidoreductase, using light energy to abstract electrons from H(2)O, generating a proton gradient subsequently used for ATP formation.</text>
</comment>
<comment type="subunit">
    <text evidence="1">PSII is composed of 1 copy each of membrane proteins PsbA, PsbB, PsbC, PsbD, PsbE, PsbF, PsbH, PsbI, PsbJ, PsbK, PsbL, PsbM, PsbT, PsbY, PsbZ, Psb30/Ycf12, at least 3 peripheral proteins of the oxygen-evolving complex and a large number of cofactors. It forms dimeric complexes.</text>
</comment>
<comment type="subcellular location">
    <subcellularLocation>
        <location evidence="1">Plastid</location>
        <location evidence="1">Chloroplast thylakoid membrane</location>
        <topology evidence="1">Single-pass membrane protein</topology>
    </subcellularLocation>
</comment>
<comment type="similarity">
    <text evidence="1">Belongs to the PsbT family.</text>
</comment>
<keyword id="KW-0150">Chloroplast</keyword>
<keyword id="KW-0472">Membrane</keyword>
<keyword id="KW-0602">Photosynthesis</keyword>
<keyword id="KW-0604">Photosystem II</keyword>
<keyword id="KW-0934">Plastid</keyword>
<keyword id="KW-0793">Thylakoid</keyword>
<keyword id="KW-0812">Transmembrane</keyword>
<keyword id="KW-1133">Transmembrane helix</keyword>
<name>PSBT_MAGAC</name>
<evidence type="ECO:0000255" key="1">
    <source>
        <dbReference type="HAMAP-Rule" id="MF_00808"/>
    </source>
</evidence>
<accession>Q5IHD9</accession>
<gene>
    <name evidence="1" type="primary">psbT</name>
</gene>
<feature type="chain" id="PRO_0000217946" description="Photosystem II reaction center protein T">
    <location>
        <begin position="1"/>
        <end position="35"/>
    </location>
</feature>
<feature type="transmembrane region" description="Helical" evidence="1">
    <location>
        <begin position="3"/>
        <end position="23"/>
    </location>
</feature>
<protein>
    <recommendedName>
        <fullName evidence="1">Photosystem II reaction center protein T</fullName>
        <shortName evidence="1">PSII-T</shortName>
    </recommendedName>
</protein>
<sequence>MEALVYTFLLVSTLGIIFFAIFFREPPKVPTKKMK</sequence>